<dbReference type="EC" id="2.5.1.78" evidence="1"/>
<dbReference type="EMBL" id="AE007317">
    <property type="protein sequence ID" value="AAK98965.1"/>
    <property type="molecule type" value="Genomic_DNA"/>
</dbReference>
<dbReference type="PIR" id="A97892">
    <property type="entry name" value="A97892"/>
</dbReference>
<dbReference type="RefSeq" id="NP_357755.1">
    <property type="nucleotide sequence ID" value="NC_003098.1"/>
</dbReference>
<dbReference type="RefSeq" id="WP_001099502.1">
    <property type="nucleotide sequence ID" value="NC_003098.1"/>
</dbReference>
<dbReference type="SMR" id="P66041"/>
<dbReference type="STRING" id="171101.spr0161"/>
<dbReference type="GeneID" id="45652336"/>
<dbReference type="KEGG" id="spr:spr0161"/>
<dbReference type="PATRIC" id="fig|171101.6.peg.191"/>
<dbReference type="eggNOG" id="COG0054">
    <property type="taxonomic scope" value="Bacteria"/>
</dbReference>
<dbReference type="HOGENOM" id="CLU_089358_1_1_9"/>
<dbReference type="UniPathway" id="UPA00275">
    <property type="reaction ID" value="UER00404"/>
</dbReference>
<dbReference type="Proteomes" id="UP000000586">
    <property type="component" value="Chromosome"/>
</dbReference>
<dbReference type="GO" id="GO:0005737">
    <property type="term" value="C:cytoplasm"/>
    <property type="evidence" value="ECO:0000318"/>
    <property type="project" value="GO_Central"/>
</dbReference>
<dbReference type="GO" id="GO:0005829">
    <property type="term" value="C:cytosol"/>
    <property type="evidence" value="ECO:0000318"/>
    <property type="project" value="GO_Central"/>
</dbReference>
<dbReference type="GO" id="GO:0009349">
    <property type="term" value="C:riboflavin synthase complex"/>
    <property type="evidence" value="ECO:0007669"/>
    <property type="project" value="InterPro"/>
</dbReference>
<dbReference type="GO" id="GO:0000906">
    <property type="term" value="F:6,7-dimethyl-8-ribityllumazine synthase activity"/>
    <property type="evidence" value="ECO:0000318"/>
    <property type="project" value="GO_Central"/>
</dbReference>
<dbReference type="GO" id="GO:0009231">
    <property type="term" value="P:riboflavin biosynthetic process"/>
    <property type="evidence" value="ECO:0000318"/>
    <property type="project" value="GO_Central"/>
</dbReference>
<dbReference type="CDD" id="cd09209">
    <property type="entry name" value="Lumazine_synthase-I"/>
    <property type="match status" value="1"/>
</dbReference>
<dbReference type="FunFam" id="3.40.50.960:FF:000001">
    <property type="entry name" value="6,7-dimethyl-8-ribityllumazine synthase"/>
    <property type="match status" value="1"/>
</dbReference>
<dbReference type="Gene3D" id="3.40.50.960">
    <property type="entry name" value="Lumazine/riboflavin synthase"/>
    <property type="match status" value="1"/>
</dbReference>
<dbReference type="HAMAP" id="MF_00178">
    <property type="entry name" value="Lumazine_synth"/>
    <property type="match status" value="1"/>
</dbReference>
<dbReference type="InterPro" id="IPR034964">
    <property type="entry name" value="LS"/>
</dbReference>
<dbReference type="InterPro" id="IPR002180">
    <property type="entry name" value="LS/RS"/>
</dbReference>
<dbReference type="InterPro" id="IPR036467">
    <property type="entry name" value="LS/RS_sf"/>
</dbReference>
<dbReference type="NCBIfam" id="TIGR00114">
    <property type="entry name" value="lumazine-synth"/>
    <property type="match status" value="1"/>
</dbReference>
<dbReference type="NCBIfam" id="NF000812">
    <property type="entry name" value="PRK00061.1-4"/>
    <property type="match status" value="1"/>
</dbReference>
<dbReference type="PANTHER" id="PTHR21058:SF0">
    <property type="entry name" value="6,7-DIMETHYL-8-RIBITYLLUMAZINE SYNTHASE"/>
    <property type="match status" value="1"/>
</dbReference>
<dbReference type="PANTHER" id="PTHR21058">
    <property type="entry name" value="6,7-DIMETHYL-8-RIBITYLLUMAZINE SYNTHASE DMRL SYNTHASE LUMAZINE SYNTHASE"/>
    <property type="match status" value="1"/>
</dbReference>
<dbReference type="Pfam" id="PF00885">
    <property type="entry name" value="DMRL_synthase"/>
    <property type="match status" value="1"/>
</dbReference>
<dbReference type="SUPFAM" id="SSF52121">
    <property type="entry name" value="Lumazine synthase"/>
    <property type="match status" value="1"/>
</dbReference>
<keyword id="KW-1185">Reference proteome</keyword>
<keyword id="KW-0686">Riboflavin biosynthesis</keyword>
<keyword id="KW-0808">Transferase</keyword>
<organism>
    <name type="scientific">Streptococcus pneumoniae (strain ATCC BAA-255 / R6)</name>
    <dbReference type="NCBI Taxonomy" id="171101"/>
    <lineage>
        <taxon>Bacteria</taxon>
        <taxon>Bacillati</taxon>
        <taxon>Bacillota</taxon>
        <taxon>Bacilli</taxon>
        <taxon>Lactobacillales</taxon>
        <taxon>Streptococcaceae</taxon>
        <taxon>Streptococcus</taxon>
    </lineage>
</organism>
<protein>
    <recommendedName>
        <fullName evidence="1">6,7-dimethyl-8-ribityllumazine synthase</fullName>
        <shortName evidence="1">DMRL synthase</shortName>
        <shortName evidence="1">LS</shortName>
        <shortName evidence="1">Lumazine synthase</shortName>
        <ecNumber evidence="1">2.5.1.78</ecNumber>
    </recommendedName>
</protein>
<accession>P66041</accession>
<accession>Q97SY8</accession>
<comment type="function">
    <text evidence="1">Catalyzes the formation of 6,7-dimethyl-8-ribityllumazine by condensation of 5-amino-6-(D-ribitylamino)uracil with 3,4-dihydroxy-2-butanone 4-phosphate. This is the penultimate step in the biosynthesis of riboflavin.</text>
</comment>
<comment type="catalytic activity">
    <reaction evidence="1">
        <text>(2S)-2-hydroxy-3-oxobutyl phosphate + 5-amino-6-(D-ribitylamino)uracil = 6,7-dimethyl-8-(1-D-ribityl)lumazine + phosphate + 2 H2O + H(+)</text>
        <dbReference type="Rhea" id="RHEA:26152"/>
        <dbReference type="ChEBI" id="CHEBI:15377"/>
        <dbReference type="ChEBI" id="CHEBI:15378"/>
        <dbReference type="ChEBI" id="CHEBI:15934"/>
        <dbReference type="ChEBI" id="CHEBI:43474"/>
        <dbReference type="ChEBI" id="CHEBI:58201"/>
        <dbReference type="ChEBI" id="CHEBI:58830"/>
        <dbReference type="EC" id="2.5.1.78"/>
    </reaction>
</comment>
<comment type="pathway">
    <text evidence="1">Cofactor biosynthesis; riboflavin biosynthesis; riboflavin from 2-hydroxy-3-oxobutyl phosphate and 5-amino-6-(D-ribitylamino)uracil: step 1/2.</text>
</comment>
<comment type="similarity">
    <text evidence="1">Belongs to the DMRL synthase family.</text>
</comment>
<feature type="chain" id="PRO_0000134818" description="6,7-dimethyl-8-ribityllumazine synthase">
    <location>
        <begin position="1"/>
        <end position="155"/>
    </location>
</feature>
<feature type="active site" description="Proton donor" evidence="1">
    <location>
        <position position="88"/>
    </location>
</feature>
<feature type="binding site" evidence="1">
    <location>
        <position position="22"/>
    </location>
    <ligand>
        <name>5-amino-6-(D-ribitylamino)uracil</name>
        <dbReference type="ChEBI" id="CHEBI:15934"/>
    </ligand>
</feature>
<feature type="binding site" evidence="1">
    <location>
        <begin position="56"/>
        <end position="58"/>
    </location>
    <ligand>
        <name>5-amino-6-(D-ribitylamino)uracil</name>
        <dbReference type="ChEBI" id="CHEBI:15934"/>
    </ligand>
</feature>
<feature type="binding site" evidence="1">
    <location>
        <begin position="80"/>
        <end position="82"/>
    </location>
    <ligand>
        <name>5-amino-6-(D-ribitylamino)uracil</name>
        <dbReference type="ChEBI" id="CHEBI:15934"/>
    </ligand>
</feature>
<feature type="binding site" evidence="1">
    <location>
        <begin position="85"/>
        <end position="86"/>
    </location>
    <ligand>
        <name>(2S)-2-hydroxy-3-oxobutyl phosphate</name>
        <dbReference type="ChEBI" id="CHEBI:58830"/>
    </ligand>
</feature>
<feature type="binding site" evidence="1">
    <location>
        <position position="113"/>
    </location>
    <ligand>
        <name>5-amino-6-(D-ribitylamino)uracil</name>
        <dbReference type="ChEBI" id="CHEBI:15934"/>
    </ligand>
</feature>
<feature type="binding site" evidence="1">
    <location>
        <position position="127"/>
    </location>
    <ligand>
        <name>(2S)-2-hydroxy-3-oxobutyl phosphate</name>
        <dbReference type="ChEBI" id="CHEBI:58830"/>
    </ligand>
</feature>
<name>RISB_STRR6</name>
<reference key="1">
    <citation type="journal article" date="2001" name="J. Bacteriol.">
        <title>Genome of the bacterium Streptococcus pneumoniae strain R6.</title>
        <authorList>
            <person name="Hoskins J."/>
            <person name="Alborn W.E. Jr."/>
            <person name="Arnold J."/>
            <person name="Blaszczak L.C."/>
            <person name="Burgett S."/>
            <person name="DeHoff B.S."/>
            <person name="Estrem S.T."/>
            <person name="Fritz L."/>
            <person name="Fu D.-J."/>
            <person name="Fuller W."/>
            <person name="Geringer C."/>
            <person name="Gilmour R."/>
            <person name="Glass J.S."/>
            <person name="Khoja H."/>
            <person name="Kraft A.R."/>
            <person name="Lagace R.E."/>
            <person name="LeBlanc D.J."/>
            <person name="Lee L.N."/>
            <person name="Lefkowitz E.J."/>
            <person name="Lu J."/>
            <person name="Matsushima P."/>
            <person name="McAhren S.M."/>
            <person name="McHenney M."/>
            <person name="McLeaster K."/>
            <person name="Mundy C.W."/>
            <person name="Nicas T.I."/>
            <person name="Norris F.H."/>
            <person name="O'Gara M."/>
            <person name="Peery R.B."/>
            <person name="Robertson G.T."/>
            <person name="Rockey P."/>
            <person name="Sun P.-M."/>
            <person name="Winkler M.E."/>
            <person name="Yang Y."/>
            <person name="Young-Bellido M."/>
            <person name="Zhao G."/>
            <person name="Zook C.A."/>
            <person name="Baltz R.H."/>
            <person name="Jaskunas S.R."/>
            <person name="Rosteck P.R. Jr."/>
            <person name="Skatrud P.L."/>
            <person name="Glass J.I."/>
        </authorList>
    </citation>
    <scope>NUCLEOTIDE SEQUENCE [LARGE SCALE GENOMIC DNA]</scope>
    <source>
        <strain>ATCC BAA-255 / R6</strain>
    </source>
</reference>
<sequence length="155" mass="16752">MNTYEGNLVANNIKIGIVVARFNEFITSKLLSGALDNLKRENVNEKDIEVAWVPGAFEIPLIASKMAKSKKYDAIICLGAVIRGNTSHYDYVCSEVSKGIAQISLNSEIPVMFGVLTTDTIEQAIERAGTKAGNKGSECAQGAIEMVNLIRTLDA</sequence>
<proteinExistence type="inferred from homology"/>
<gene>
    <name evidence="1" type="primary">ribH</name>
    <name type="synonym">ribE</name>
    <name type="ordered locus">spr0161</name>
</gene>
<evidence type="ECO:0000255" key="1">
    <source>
        <dbReference type="HAMAP-Rule" id="MF_00178"/>
    </source>
</evidence>